<protein>
    <recommendedName>
        <fullName>Putative protein PeaD</fullName>
    </recommendedName>
</protein>
<gene>
    <name type="primary">peaD</name>
    <name type="synonym">ybcD</name>
    <name type="ordered locus">b4508</name>
</gene>
<name>PEAD_ECOLI</name>
<accession>P77528</accession>
<comment type="miscellaneous">
    <text>Encoded by the cryptic lambdoid prophage DLP12.</text>
</comment>
<comment type="similarity">
    <text evidence="1">Belongs to the phage P protein family.</text>
</comment>
<comment type="caution">
    <text evidence="1">Could be the product of a pseudogene. It lacks the N-terminal part of the helicase loader protein.</text>
</comment>
<dbReference type="EMBL" id="U00096">
    <property type="status" value="NOT_ANNOTATED_CDS"/>
    <property type="molecule type" value="Genomic_DNA"/>
</dbReference>
<dbReference type="SMR" id="P77528"/>
<dbReference type="FunCoup" id="P77528">
    <property type="interactions" value="45"/>
</dbReference>
<dbReference type="IntAct" id="P77528">
    <property type="interactions" value="2"/>
</dbReference>
<dbReference type="PATRIC" id="fig|83333.103.peg.1304"/>
<dbReference type="InParanoid" id="P77528"/>
<dbReference type="Proteomes" id="UP000000625">
    <property type="component" value="Chromosome"/>
</dbReference>
<dbReference type="GO" id="GO:0006270">
    <property type="term" value="P:DNA replication initiation"/>
    <property type="evidence" value="ECO:0007669"/>
    <property type="project" value="InterPro"/>
</dbReference>
<dbReference type="InterPro" id="IPR009731">
    <property type="entry name" value="P-like"/>
</dbReference>
<dbReference type="Pfam" id="PF06992">
    <property type="entry name" value="Phage_lambda_P"/>
    <property type="match status" value="1"/>
</dbReference>
<sequence>MVTNLYQNMRANALADAELRRKAADELTCMTARINRGETIPEPVKQLPVMGGRPLNRAQALAKIAEIKAKFGLKGASV</sequence>
<evidence type="ECO:0000305" key="1"/>
<organism>
    <name type="scientific">Escherichia coli (strain K12)</name>
    <dbReference type="NCBI Taxonomy" id="83333"/>
    <lineage>
        <taxon>Bacteria</taxon>
        <taxon>Pseudomonadati</taxon>
        <taxon>Pseudomonadota</taxon>
        <taxon>Gammaproteobacteria</taxon>
        <taxon>Enterobacterales</taxon>
        <taxon>Enterobacteriaceae</taxon>
        <taxon>Escherichia</taxon>
    </lineage>
</organism>
<keyword id="KW-1185">Reference proteome</keyword>
<proteinExistence type="uncertain"/>
<feature type="chain" id="PRO_0000272024" description="Putative protein PeaD">
    <location>
        <begin position="1"/>
        <end position="78"/>
    </location>
</feature>
<reference key="1">
    <citation type="journal article" date="1997" name="Science">
        <title>The complete genome sequence of Escherichia coli K-12.</title>
        <authorList>
            <person name="Blattner F.R."/>
            <person name="Plunkett G. III"/>
            <person name="Bloch C.A."/>
            <person name="Perna N.T."/>
            <person name="Burland V."/>
            <person name="Riley M."/>
            <person name="Collado-Vides J."/>
            <person name="Glasner J.D."/>
            <person name="Rode C.K."/>
            <person name="Mayhew G.F."/>
            <person name="Gregor J."/>
            <person name="Davis N.W."/>
            <person name="Kirkpatrick H.A."/>
            <person name="Goeden M.A."/>
            <person name="Rose D.J."/>
            <person name="Mau B."/>
            <person name="Shao Y."/>
        </authorList>
    </citation>
    <scope>NUCLEOTIDE SEQUENCE [LARGE SCALE GENOMIC DNA]</scope>
    <source>
        <strain>K12 / MG1655 / ATCC 47076</strain>
    </source>
</reference>